<evidence type="ECO:0000255" key="1">
    <source>
        <dbReference type="HAMAP-Rule" id="MF_01324"/>
    </source>
</evidence>
<geneLocation type="chloroplast"/>
<accession>Q3V544</accession>
<organism>
    <name type="scientific">Acorus calamus</name>
    <name type="common">Sweet flag</name>
    <dbReference type="NCBI Taxonomy" id="4465"/>
    <lineage>
        <taxon>Eukaryota</taxon>
        <taxon>Viridiplantae</taxon>
        <taxon>Streptophyta</taxon>
        <taxon>Embryophyta</taxon>
        <taxon>Tracheophyta</taxon>
        <taxon>Spermatophyta</taxon>
        <taxon>Magnoliopsida</taxon>
        <taxon>Liliopsida</taxon>
        <taxon>Acoraceae</taxon>
        <taxon>Acorus</taxon>
    </lineage>
</organism>
<proteinExistence type="inferred from homology"/>
<dbReference type="EC" id="2.7.7.6" evidence="1"/>
<dbReference type="EMBL" id="AJ879453">
    <property type="protein sequence ID" value="CAI53784.1"/>
    <property type="molecule type" value="Genomic_DNA"/>
</dbReference>
<dbReference type="RefSeq" id="YP_319755.2">
    <property type="nucleotide sequence ID" value="NC_007407.1"/>
</dbReference>
<dbReference type="SMR" id="Q3V544"/>
<dbReference type="GeneID" id="3677452"/>
<dbReference type="GO" id="GO:0009507">
    <property type="term" value="C:chloroplast"/>
    <property type="evidence" value="ECO:0007669"/>
    <property type="project" value="UniProtKB-SubCell"/>
</dbReference>
<dbReference type="GO" id="GO:0000428">
    <property type="term" value="C:DNA-directed RNA polymerase complex"/>
    <property type="evidence" value="ECO:0007669"/>
    <property type="project" value="UniProtKB-KW"/>
</dbReference>
<dbReference type="GO" id="GO:0005739">
    <property type="term" value="C:mitochondrion"/>
    <property type="evidence" value="ECO:0007669"/>
    <property type="project" value="GOC"/>
</dbReference>
<dbReference type="GO" id="GO:0003677">
    <property type="term" value="F:DNA binding"/>
    <property type="evidence" value="ECO:0007669"/>
    <property type="project" value="UniProtKB-UniRule"/>
</dbReference>
<dbReference type="GO" id="GO:0003899">
    <property type="term" value="F:DNA-directed RNA polymerase activity"/>
    <property type="evidence" value="ECO:0007669"/>
    <property type="project" value="UniProtKB-UniRule"/>
</dbReference>
<dbReference type="GO" id="GO:0008270">
    <property type="term" value="F:zinc ion binding"/>
    <property type="evidence" value="ECO:0007669"/>
    <property type="project" value="UniProtKB-UniRule"/>
</dbReference>
<dbReference type="GO" id="GO:0006351">
    <property type="term" value="P:DNA-templated transcription"/>
    <property type="evidence" value="ECO:0007669"/>
    <property type="project" value="UniProtKB-UniRule"/>
</dbReference>
<dbReference type="CDD" id="cd02655">
    <property type="entry name" value="RNAP_beta'_C"/>
    <property type="match status" value="1"/>
</dbReference>
<dbReference type="FunFam" id="1.10.132.30:FF:000002">
    <property type="entry name" value="DNA-directed RNA polymerase subunit beta"/>
    <property type="match status" value="1"/>
</dbReference>
<dbReference type="FunFam" id="1.10.1790.20:FF:000002">
    <property type="entry name" value="DNA-directed RNA polymerase subunit beta"/>
    <property type="match status" value="1"/>
</dbReference>
<dbReference type="Gene3D" id="1.10.132.30">
    <property type="match status" value="1"/>
</dbReference>
<dbReference type="Gene3D" id="1.10.150.390">
    <property type="match status" value="1"/>
</dbReference>
<dbReference type="Gene3D" id="1.10.1790.20">
    <property type="match status" value="1"/>
</dbReference>
<dbReference type="Gene3D" id="1.10.274.100">
    <property type="entry name" value="RNA polymerase Rpb1, domain 3"/>
    <property type="match status" value="1"/>
</dbReference>
<dbReference type="HAMAP" id="MF_01324">
    <property type="entry name" value="RNApol_bact_RpoC2"/>
    <property type="match status" value="1"/>
</dbReference>
<dbReference type="InterPro" id="IPR012756">
    <property type="entry name" value="DNA-dir_RpoC2_beta_pp"/>
</dbReference>
<dbReference type="InterPro" id="IPR050254">
    <property type="entry name" value="RNA_pol_beta''_euk"/>
</dbReference>
<dbReference type="InterPro" id="IPR042102">
    <property type="entry name" value="RNA_pol_Rpb1_3_sf"/>
</dbReference>
<dbReference type="InterPro" id="IPR007083">
    <property type="entry name" value="RNA_pol_Rpb1_4"/>
</dbReference>
<dbReference type="InterPro" id="IPR007081">
    <property type="entry name" value="RNA_pol_Rpb1_5"/>
</dbReference>
<dbReference type="InterPro" id="IPR038120">
    <property type="entry name" value="Rpb1_funnel_sf"/>
</dbReference>
<dbReference type="NCBIfam" id="TIGR02388">
    <property type="entry name" value="rpoC2_cyan"/>
    <property type="match status" value="1"/>
</dbReference>
<dbReference type="PANTHER" id="PTHR34995">
    <property type="entry name" value="DNA-DIRECTED RNA POLYMERASE SUBUNIT BETA"/>
    <property type="match status" value="1"/>
</dbReference>
<dbReference type="PANTHER" id="PTHR34995:SF1">
    <property type="entry name" value="DNA-DIRECTED RNA POLYMERASE SUBUNIT BETA"/>
    <property type="match status" value="1"/>
</dbReference>
<dbReference type="Pfam" id="PF05000">
    <property type="entry name" value="RNA_pol_Rpb1_4"/>
    <property type="match status" value="1"/>
</dbReference>
<dbReference type="Pfam" id="PF04998">
    <property type="entry name" value="RNA_pol_Rpb1_5"/>
    <property type="match status" value="2"/>
</dbReference>
<dbReference type="SUPFAM" id="SSF64484">
    <property type="entry name" value="beta and beta-prime subunits of DNA dependent RNA-polymerase"/>
    <property type="match status" value="1"/>
</dbReference>
<protein>
    <recommendedName>
        <fullName evidence="1">DNA-directed RNA polymerase subunit beta''</fullName>
        <ecNumber evidence="1">2.7.7.6</ecNumber>
    </recommendedName>
    <alternativeName>
        <fullName evidence="1">PEP</fullName>
    </alternativeName>
    <alternativeName>
        <fullName evidence="1">Plastid-encoded RNA polymerase subunit beta''</fullName>
        <shortName evidence="1">RNA polymerase subunit beta''</shortName>
    </alternativeName>
</protein>
<sequence length="1386" mass="156831">MEVLMAERADLVYHNKAIDGTAMKRLISRLIDHFGMAYTSHILDQVKTLGFRQATATSISLGIDDLLTIPSKGWLVQDAEQQSFILEKHHSYGNVHAVEKLRQSIEIWYATSEYLRQEMNPNFRMTDPSNPVHIMSFSGARGNASQVHQLVGMRGLMSDPQGQMIDLPIQSNLREGLSLTEYIISCYGARKGVVDTAVRTSDAGYLTRRLVEVVQHIVVRRTDCGTIRGISVQPRNGMTERMFFQTLIGRVLADDVYIGLRCIAARNQDIGIGLVNRFITFRAQPVYIRTPFTCRSTSWICQLCYGRSPTHGDLVELGEAVGIIAGQSIGEPGTQLTLRTFHTGGVFTGGTAEHVRAPSNGKIKFNEELVHPTRTRHGHPAFLCSIDLYVTVEGRDIIHNVNIPPKSLILVQNDQYVESEQVIAEIRAGTSTFNFKERVQKHIYSESAGEMHWSTDVYHAPEYTYGNVHLLPKTSHLWILSGGPYRSSIVSSSLHKDQDQTNAHSFSVERRYISDLSMTNGRVRHKLFSSDLSGKRGDRILDYSRPDQIISKGHWNFIYPSILHENSDFLAKRRKNRFIIPFQYDQEGEKELIPHSGISIEIPINGMLRRNSILAYFDDTRYRRSSSGITKYGTVEIDSIVKKEDFIEYRGTKEFSSKYQMKVDRFFFIPEEVHILPGSSSIMVRNNSLIGVDTRITLNIRSRVGGLVRVERKKKNIELKIVSGDIHFPGETDKISRHSGILIPPGTEKKNSKESKTKLKNWIYVQRITPTKKKYFVLVRPVATYEIADGINLATLFPQDLLQERDNVQLRVVNYILYGNGKPIRGISHTSIQLVRTCLVLNWDQEQNGSIEGVRASFVEVRANDLIRDFIRIELCKSAILYTGKRKDIAGSGLIHDNVSDRTNINPVYLKDKIPSFIQHQGTVGTLLNRNKECQSLILLSSSNCFRIGPFNGSKYHNVPKESIKEDPIIPIRDSLGLLGTTVPKIANFFYLSYHVITHNHILLTKYLLRDHLKQAFQVLRYCLMDENRRIYNPDPCSNIIFNAFDLNWRFLHHDYSEETSTILSLGQFVCENVCLFKHGPQIKSGQVIIVHVDSFVIRAAKPYLATPGATVHGHYGEILYGGDTLITFIYEKSRSGDITQGLPKVEQVLEVRSIDSISTNLEKRVEGWNEHITKILGIPWGFLIGAELTIAQSRISLVNKIQKVYRSQGVQIHNKHIEIIVRQITSKVLVSEDGMSNVFSPGELIGLLRAERTGRALEEAICYRAILLGITRASLNTQSFISEASFQETARVLAKAALRGRVDWLKGLKENVVLGAMIPVGTGFKALVHRSRKPNNIHLEIKKNNLFEGQVGDDILFYHRELFGSCGPNNFHDTSEQSFMKFHDS</sequence>
<reference key="1">
    <citation type="journal article" date="2005" name="Mol. Biol. Evol.">
        <title>Analysis of Acorus calamus chloroplast genome and its phylogenetic implications.</title>
        <authorList>
            <person name="Goremykin V.V."/>
            <person name="Holland B."/>
            <person name="Hirsch-Ernst K.I."/>
            <person name="Hellwig F.H."/>
        </authorList>
    </citation>
    <scope>NUCLEOTIDE SEQUENCE [LARGE SCALE GENOMIC DNA]</scope>
</reference>
<feature type="chain" id="PRO_0000225330" description="DNA-directed RNA polymerase subunit beta''">
    <location>
        <begin position="1"/>
        <end position="1386"/>
    </location>
</feature>
<feature type="binding site" evidence="1">
    <location>
        <position position="224"/>
    </location>
    <ligand>
        <name>Zn(2+)</name>
        <dbReference type="ChEBI" id="CHEBI:29105"/>
    </ligand>
</feature>
<feature type="binding site" evidence="1">
    <location>
        <position position="294"/>
    </location>
    <ligand>
        <name>Zn(2+)</name>
        <dbReference type="ChEBI" id="CHEBI:29105"/>
    </ligand>
</feature>
<feature type="binding site" evidence="1">
    <location>
        <position position="301"/>
    </location>
    <ligand>
        <name>Zn(2+)</name>
        <dbReference type="ChEBI" id="CHEBI:29105"/>
    </ligand>
</feature>
<feature type="binding site" evidence="1">
    <location>
        <position position="304"/>
    </location>
    <ligand>
        <name>Zn(2+)</name>
        <dbReference type="ChEBI" id="CHEBI:29105"/>
    </ligand>
</feature>
<gene>
    <name evidence="1" type="primary">rpoC2</name>
</gene>
<keyword id="KW-0150">Chloroplast</keyword>
<keyword id="KW-0240">DNA-directed RNA polymerase</keyword>
<keyword id="KW-0479">Metal-binding</keyword>
<keyword id="KW-0548">Nucleotidyltransferase</keyword>
<keyword id="KW-0934">Plastid</keyword>
<keyword id="KW-0804">Transcription</keyword>
<keyword id="KW-0808">Transferase</keyword>
<keyword id="KW-0862">Zinc</keyword>
<name>RPOC2_ACOCL</name>
<comment type="function">
    <text evidence="1">DNA-dependent RNA polymerase catalyzes the transcription of DNA into RNA using the four ribonucleoside triphosphates as substrates.</text>
</comment>
<comment type="catalytic activity">
    <reaction evidence="1">
        <text>RNA(n) + a ribonucleoside 5'-triphosphate = RNA(n+1) + diphosphate</text>
        <dbReference type="Rhea" id="RHEA:21248"/>
        <dbReference type="Rhea" id="RHEA-COMP:14527"/>
        <dbReference type="Rhea" id="RHEA-COMP:17342"/>
        <dbReference type="ChEBI" id="CHEBI:33019"/>
        <dbReference type="ChEBI" id="CHEBI:61557"/>
        <dbReference type="ChEBI" id="CHEBI:140395"/>
        <dbReference type="EC" id="2.7.7.6"/>
    </reaction>
</comment>
<comment type="cofactor">
    <cofactor evidence="1">
        <name>Zn(2+)</name>
        <dbReference type="ChEBI" id="CHEBI:29105"/>
    </cofactor>
    <text evidence="1">Binds 1 Zn(2+) ion per subunit.</text>
</comment>
<comment type="subunit">
    <text evidence="1">In plastids the minimal PEP RNA polymerase catalytic core is composed of four subunits: alpha, beta, beta', and beta''. When a (nuclear-encoded) sigma factor is associated with the core the holoenzyme is formed, which can initiate transcription.</text>
</comment>
<comment type="subcellular location">
    <subcellularLocation>
        <location evidence="1">Plastid</location>
        <location evidence="1">Chloroplast</location>
    </subcellularLocation>
</comment>
<comment type="similarity">
    <text evidence="1">Belongs to the RNA polymerase beta' chain family. RpoC2 subfamily.</text>
</comment>